<feature type="chain" id="PRO_0000160238" description="NAD-dependent malic enzyme 1">
    <location>
        <begin position="1"/>
        <end position="562"/>
    </location>
</feature>
<feature type="active site" description="Proton donor" evidence="1">
    <location>
        <position position="101"/>
    </location>
</feature>
<feature type="active site" description="Proton acceptor" evidence="1">
    <location>
        <position position="172"/>
    </location>
</feature>
<feature type="binding site" evidence="1">
    <location>
        <position position="154"/>
    </location>
    <ligand>
        <name>NAD(+)</name>
        <dbReference type="ChEBI" id="CHEBI:57540"/>
    </ligand>
</feature>
<feature type="binding site" evidence="1">
    <location>
        <position position="243"/>
    </location>
    <ligand>
        <name>a divalent metal cation</name>
        <dbReference type="ChEBI" id="CHEBI:60240"/>
    </ligand>
</feature>
<feature type="binding site" evidence="1">
    <location>
        <position position="244"/>
    </location>
    <ligand>
        <name>a divalent metal cation</name>
        <dbReference type="ChEBI" id="CHEBI:60240"/>
    </ligand>
</feature>
<feature type="binding site" evidence="1">
    <location>
        <position position="267"/>
    </location>
    <ligand>
        <name>a divalent metal cation</name>
        <dbReference type="ChEBI" id="CHEBI:60240"/>
    </ligand>
</feature>
<feature type="binding site" evidence="1">
    <location>
        <position position="267"/>
    </location>
    <ligand>
        <name>NAD(+)</name>
        <dbReference type="ChEBI" id="CHEBI:57540"/>
    </ligand>
</feature>
<feature type="binding site" evidence="1">
    <location>
        <position position="415"/>
    </location>
    <ligand>
        <name>NAD(+)</name>
        <dbReference type="ChEBI" id="CHEBI:57540"/>
    </ligand>
</feature>
<feature type="site" description="Important for activity" evidence="1">
    <location>
        <position position="267"/>
    </location>
</feature>
<sequence length="562" mass="62088">MNNDKRPLYIPFAGPALLSTPLLNKGSAFSAEERISFNLEGLLPETTETIQEQVERAYMQYKAFESDMDKHIYLRNIQDTNETLFYRLVQNHITEMMPIIYTPTVGAACENFSNIYRRGRGLFVSYANRDRIDDILNNASNHNVKVIVVTDGERILGLGDQGIGGMGIPIGKLSLYTACGGISPAYTLPIVLDVGTNNPQRLADPMYMGWRHPRITGADYDAFVEEFIQAVQRRWPDALIQFEDFAQKNAMPLLERYKNRICCFNDDIQGTAAVTVGSLMAACQAAGSKLSEQRITFLGAGSAGCGIAEAIIAQMVSEGISDKKARSQVFMVDRWGLLQEGMPNLLDFQQRLVQKHSVTAKWETEANGFSLLDVVKNAKPTVLIGVSGAPGLFTQEVIQEMHKHCPRPIVFPLSNPTSRVEAVPADIIRWTNGDALVATGSPFDPVIHEGKTYPIVQCNNSYIFPGIGLGVLAVNAKRVTDEMLMESSRALATCSPLAINGKGALLPPLEEIHTVSKRIAYAVAKKAIEQGVALEIADDALQVAIEQHFWQPVYRRYKRTAF</sequence>
<organism>
    <name type="scientific">Vibrio vulnificus (strain YJ016)</name>
    <dbReference type="NCBI Taxonomy" id="196600"/>
    <lineage>
        <taxon>Bacteria</taxon>
        <taxon>Pseudomonadati</taxon>
        <taxon>Pseudomonadota</taxon>
        <taxon>Gammaproteobacteria</taxon>
        <taxon>Vibrionales</taxon>
        <taxon>Vibrionaceae</taxon>
        <taxon>Vibrio</taxon>
    </lineage>
</organism>
<reference key="1">
    <citation type="journal article" date="2003" name="Genome Res.">
        <title>Comparative genome analysis of Vibrio vulnificus, a marine pathogen.</title>
        <authorList>
            <person name="Chen C.-Y."/>
            <person name="Wu K.-M."/>
            <person name="Chang Y.-C."/>
            <person name="Chang C.-H."/>
            <person name="Tsai H.-C."/>
            <person name="Liao T.-L."/>
            <person name="Liu Y.-M."/>
            <person name="Chen H.-J."/>
            <person name="Shen A.B.-T."/>
            <person name="Li J.-C."/>
            <person name="Su T.-L."/>
            <person name="Shao C.-P."/>
            <person name="Lee C.-T."/>
            <person name="Hor L.-I."/>
            <person name="Tsai S.-F."/>
        </authorList>
    </citation>
    <scope>NUCLEOTIDE SEQUENCE [LARGE SCALE GENOMIC DNA]</scope>
    <source>
        <strain>YJ016</strain>
    </source>
</reference>
<dbReference type="EC" id="1.1.1.38" evidence="1"/>
<dbReference type="EMBL" id="BA000037">
    <property type="protein sequence ID" value="BAC94228.1"/>
    <property type="status" value="ALT_INIT"/>
    <property type="molecule type" value="Genomic_DNA"/>
</dbReference>
<dbReference type="RefSeq" id="WP_011080634.1">
    <property type="nucleotide sequence ID" value="NC_005139.1"/>
</dbReference>
<dbReference type="SMR" id="Q7MLG3"/>
<dbReference type="STRING" id="672.VV93_v1c13730"/>
<dbReference type="KEGG" id="vvy:VV1464"/>
<dbReference type="eggNOG" id="COG0281">
    <property type="taxonomic scope" value="Bacteria"/>
</dbReference>
<dbReference type="HOGENOM" id="CLU_011405_5_2_6"/>
<dbReference type="Proteomes" id="UP000002675">
    <property type="component" value="Chromosome I"/>
</dbReference>
<dbReference type="GO" id="GO:0005829">
    <property type="term" value="C:cytosol"/>
    <property type="evidence" value="ECO:0007669"/>
    <property type="project" value="TreeGrafter"/>
</dbReference>
<dbReference type="GO" id="GO:0004471">
    <property type="term" value="F:malate dehydrogenase (decarboxylating) (NAD+) activity"/>
    <property type="evidence" value="ECO:0007669"/>
    <property type="project" value="UniProtKB-UniRule"/>
</dbReference>
<dbReference type="GO" id="GO:0046872">
    <property type="term" value="F:metal ion binding"/>
    <property type="evidence" value="ECO:0007669"/>
    <property type="project" value="UniProtKB-KW"/>
</dbReference>
<dbReference type="GO" id="GO:0051287">
    <property type="term" value="F:NAD binding"/>
    <property type="evidence" value="ECO:0007669"/>
    <property type="project" value="InterPro"/>
</dbReference>
<dbReference type="GO" id="GO:0008948">
    <property type="term" value="F:oxaloacetate decarboxylase activity"/>
    <property type="evidence" value="ECO:0007669"/>
    <property type="project" value="UniProtKB-UniRule"/>
</dbReference>
<dbReference type="GO" id="GO:0006108">
    <property type="term" value="P:malate metabolic process"/>
    <property type="evidence" value="ECO:0007669"/>
    <property type="project" value="TreeGrafter"/>
</dbReference>
<dbReference type="CDD" id="cd05312">
    <property type="entry name" value="NAD_bind_1_malic_enz"/>
    <property type="match status" value="1"/>
</dbReference>
<dbReference type="FunFam" id="3.40.50.10380:FF:000001">
    <property type="entry name" value="NAD-dependent malic enzyme"/>
    <property type="match status" value="1"/>
</dbReference>
<dbReference type="FunFam" id="3.40.50.720:FF:000055">
    <property type="entry name" value="NAD-dependent malic enzyme"/>
    <property type="match status" value="1"/>
</dbReference>
<dbReference type="Gene3D" id="3.40.50.10380">
    <property type="entry name" value="Malic enzyme, N-terminal domain"/>
    <property type="match status" value="1"/>
</dbReference>
<dbReference type="Gene3D" id="3.40.50.720">
    <property type="entry name" value="NAD(P)-binding Rossmann-like Domain"/>
    <property type="match status" value="1"/>
</dbReference>
<dbReference type="HAMAP" id="MF_01619">
    <property type="entry name" value="NAD_malic_enz"/>
    <property type="match status" value="1"/>
</dbReference>
<dbReference type="InterPro" id="IPR046346">
    <property type="entry name" value="Aminoacid_DH-like_N_sf"/>
</dbReference>
<dbReference type="InterPro" id="IPR015884">
    <property type="entry name" value="Malic_enzyme_CS"/>
</dbReference>
<dbReference type="InterPro" id="IPR012301">
    <property type="entry name" value="Malic_N_dom"/>
</dbReference>
<dbReference type="InterPro" id="IPR037062">
    <property type="entry name" value="Malic_N_dom_sf"/>
</dbReference>
<dbReference type="InterPro" id="IPR012302">
    <property type="entry name" value="Malic_NAD-bd"/>
</dbReference>
<dbReference type="InterPro" id="IPR001891">
    <property type="entry name" value="Malic_OxRdtase"/>
</dbReference>
<dbReference type="InterPro" id="IPR036291">
    <property type="entry name" value="NAD(P)-bd_dom_sf"/>
</dbReference>
<dbReference type="InterPro" id="IPR023667">
    <property type="entry name" value="NAD_malic_enz_proteobac"/>
</dbReference>
<dbReference type="NCBIfam" id="NF010052">
    <property type="entry name" value="PRK13529.1"/>
    <property type="match status" value="1"/>
</dbReference>
<dbReference type="PANTHER" id="PTHR23406">
    <property type="entry name" value="MALIC ENZYME-RELATED"/>
    <property type="match status" value="1"/>
</dbReference>
<dbReference type="PANTHER" id="PTHR23406:SF34">
    <property type="entry name" value="NAD-DEPENDENT MALIC ENZYME, MITOCHONDRIAL"/>
    <property type="match status" value="1"/>
</dbReference>
<dbReference type="Pfam" id="PF00390">
    <property type="entry name" value="malic"/>
    <property type="match status" value="1"/>
</dbReference>
<dbReference type="Pfam" id="PF03949">
    <property type="entry name" value="Malic_M"/>
    <property type="match status" value="1"/>
</dbReference>
<dbReference type="PIRSF" id="PIRSF000106">
    <property type="entry name" value="ME"/>
    <property type="match status" value="1"/>
</dbReference>
<dbReference type="PRINTS" id="PR00072">
    <property type="entry name" value="MALOXRDTASE"/>
</dbReference>
<dbReference type="SMART" id="SM01274">
    <property type="entry name" value="malic"/>
    <property type="match status" value="1"/>
</dbReference>
<dbReference type="SMART" id="SM00919">
    <property type="entry name" value="Malic_M"/>
    <property type="match status" value="1"/>
</dbReference>
<dbReference type="SUPFAM" id="SSF53223">
    <property type="entry name" value="Aminoacid dehydrogenase-like, N-terminal domain"/>
    <property type="match status" value="1"/>
</dbReference>
<dbReference type="SUPFAM" id="SSF51735">
    <property type="entry name" value="NAD(P)-binding Rossmann-fold domains"/>
    <property type="match status" value="1"/>
</dbReference>
<dbReference type="PROSITE" id="PS00331">
    <property type="entry name" value="MALIC_ENZYMES"/>
    <property type="match status" value="1"/>
</dbReference>
<comment type="catalytic activity">
    <reaction evidence="1">
        <text>(S)-malate + NAD(+) = pyruvate + CO2 + NADH</text>
        <dbReference type="Rhea" id="RHEA:12653"/>
        <dbReference type="ChEBI" id="CHEBI:15361"/>
        <dbReference type="ChEBI" id="CHEBI:15589"/>
        <dbReference type="ChEBI" id="CHEBI:16526"/>
        <dbReference type="ChEBI" id="CHEBI:57540"/>
        <dbReference type="ChEBI" id="CHEBI:57945"/>
        <dbReference type="EC" id="1.1.1.38"/>
    </reaction>
</comment>
<comment type="catalytic activity">
    <reaction evidence="1">
        <text>oxaloacetate + H(+) = pyruvate + CO2</text>
        <dbReference type="Rhea" id="RHEA:15641"/>
        <dbReference type="ChEBI" id="CHEBI:15361"/>
        <dbReference type="ChEBI" id="CHEBI:15378"/>
        <dbReference type="ChEBI" id="CHEBI:16452"/>
        <dbReference type="ChEBI" id="CHEBI:16526"/>
        <dbReference type="EC" id="1.1.1.38"/>
    </reaction>
</comment>
<comment type="cofactor">
    <cofactor evidence="1">
        <name>Mg(2+)</name>
        <dbReference type="ChEBI" id="CHEBI:18420"/>
    </cofactor>
    <cofactor evidence="1">
        <name>Mn(2+)</name>
        <dbReference type="ChEBI" id="CHEBI:29035"/>
    </cofactor>
    <text evidence="1">Divalent metal cations. Prefers magnesium or manganese.</text>
</comment>
<comment type="subunit">
    <text evidence="1">Homotetramer.</text>
</comment>
<comment type="similarity">
    <text evidence="1">Belongs to the malic enzymes family.</text>
</comment>
<comment type="sequence caution" evidence="2">
    <conflict type="erroneous initiation">
        <sequence resource="EMBL-CDS" id="BAC94228"/>
    </conflict>
</comment>
<name>MAO11_VIBVY</name>
<gene>
    <name evidence="1" type="primary">maeA1</name>
    <name type="ordered locus">VV1464</name>
</gene>
<proteinExistence type="inferred from homology"/>
<accession>Q7MLG3</accession>
<evidence type="ECO:0000255" key="1">
    <source>
        <dbReference type="HAMAP-Rule" id="MF_01619"/>
    </source>
</evidence>
<evidence type="ECO:0000305" key="2"/>
<protein>
    <recommendedName>
        <fullName evidence="1">NAD-dependent malic enzyme 1</fullName>
        <shortName evidence="1">NAD-ME 1</shortName>
        <ecNumber evidence="1">1.1.1.38</ecNumber>
    </recommendedName>
</protein>
<keyword id="KW-0479">Metal-binding</keyword>
<keyword id="KW-0520">NAD</keyword>
<keyword id="KW-0560">Oxidoreductase</keyword>